<comment type="subcellular location">
    <subcellularLocation>
        <location evidence="1">Cell inner membrane</location>
        <topology evidence="1">Multi-pass membrane protein</topology>
    </subcellularLocation>
</comment>
<comment type="similarity">
    <text evidence="3">Belongs to the EamA transporter family.</text>
</comment>
<sequence>MKQQAGIGILLALTTAICWGALPIAMKQVLEVMEPPTIVFYRFLMASIGLGAILAVKKRLPPLRVFRKPRWLILLAVATAGLFGNFILFSSSLQYLSPTASQVIGQLSPVGMMVASVFILKEKMRSTQVVGALMLLSGLVMFFNTSLVEIFTKLTDYTWGVIFGVGAATVWVSYGVAQKVLLRRLASPQILFLLYTLCTIALFPLAKPGVIAQLSHWQLACLIFCGLNTLVGYGALAEAMARWQAAQVSAIITLTPLFTLFFSDLLSLAWPDFFARPMLNLLGYLGAFVVVAGAMYSAIGHRIWGGLRKHTTVVSQPRAGE</sequence>
<feature type="chain" id="PRO_0000108171" description="Uncharacterized inner membrane transporter YhbE">
    <location>
        <begin position="1"/>
        <end position="321"/>
    </location>
</feature>
<feature type="topological domain" description="Cytoplasmic" evidence="2">
    <location>
        <begin position="1"/>
        <end position="5"/>
    </location>
</feature>
<feature type="transmembrane region" description="Helical" evidence="2">
    <location>
        <begin position="6"/>
        <end position="26"/>
    </location>
</feature>
<feature type="topological domain" description="Periplasmic" evidence="2">
    <location>
        <begin position="27"/>
        <end position="35"/>
    </location>
</feature>
<feature type="transmembrane region" description="Helical" evidence="2">
    <location>
        <begin position="36"/>
        <end position="56"/>
    </location>
</feature>
<feature type="topological domain" description="Cytoplasmic" evidence="2">
    <location>
        <begin position="57"/>
        <end position="70"/>
    </location>
</feature>
<feature type="transmembrane region" description="Helical" evidence="2">
    <location>
        <begin position="71"/>
        <end position="91"/>
    </location>
</feature>
<feature type="topological domain" description="Periplasmic" evidence="2">
    <location>
        <begin position="92"/>
        <end position="99"/>
    </location>
</feature>
<feature type="transmembrane region" description="Helical" evidence="2">
    <location>
        <begin position="100"/>
        <end position="120"/>
    </location>
</feature>
<feature type="topological domain" description="Cytoplasmic" evidence="2">
    <location>
        <begin position="121"/>
        <end position="130"/>
    </location>
</feature>
<feature type="transmembrane region" description="Helical" evidence="2">
    <location>
        <begin position="131"/>
        <end position="151"/>
    </location>
</feature>
<feature type="topological domain" description="Periplasmic" evidence="2">
    <location>
        <begin position="152"/>
        <end position="156"/>
    </location>
</feature>
<feature type="transmembrane region" description="Helical" evidence="2">
    <location>
        <begin position="157"/>
        <end position="177"/>
    </location>
</feature>
<feature type="topological domain" description="Cytoplasmic" evidence="2">
    <location>
        <begin position="178"/>
        <end position="190"/>
    </location>
</feature>
<feature type="transmembrane region" description="Helical" evidence="2">
    <location>
        <begin position="191"/>
        <end position="211"/>
    </location>
</feature>
<feature type="topological domain" description="Periplasmic" evidence="2">
    <location>
        <begin position="212"/>
        <end position="216"/>
    </location>
</feature>
<feature type="transmembrane region" description="Helical" evidence="2">
    <location>
        <begin position="217"/>
        <end position="237"/>
    </location>
</feature>
<feature type="topological domain" description="Cytoplasmic" evidence="2">
    <location>
        <begin position="238"/>
        <end position="249"/>
    </location>
</feature>
<feature type="transmembrane region" description="Helical" evidence="2">
    <location>
        <begin position="250"/>
        <end position="270"/>
    </location>
</feature>
<feature type="topological domain" description="Periplasmic" evidence="2">
    <location>
        <begin position="271"/>
        <end position="278"/>
    </location>
</feature>
<feature type="transmembrane region" description="Helical" evidence="2">
    <location>
        <begin position="279"/>
        <end position="299"/>
    </location>
</feature>
<feature type="topological domain" description="Cytoplasmic" evidence="2">
    <location>
        <begin position="300"/>
        <end position="321"/>
    </location>
</feature>
<feature type="domain" description="EamA 1">
    <location>
        <begin position="17"/>
        <end position="144"/>
    </location>
</feature>
<feature type="domain" description="EamA 2">
    <location>
        <begin position="169"/>
        <end position="292"/>
    </location>
</feature>
<proteinExistence type="inferred from homology"/>
<name>YHBE_SHIFL</name>
<gene>
    <name type="primary">yhbE</name>
    <name type="ordered locus">SF3224</name>
    <name type="ordered locus">S3442</name>
</gene>
<keyword id="KW-0997">Cell inner membrane</keyword>
<keyword id="KW-1003">Cell membrane</keyword>
<keyword id="KW-0472">Membrane</keyword>
<keyword id="KW-1185">Reference proteome</keyword>
<keyword id="KW-0677">Repeat</keyword>
<keyword id="KW-0812">Transmembrane</keyword>
<keyword id="KW-1133">Transmembrane helix</keyword>
<keyword id="KW-0813">Transport</keyword>
<organism>
    <name type="scientific">Shigella flexneri</name>
    <dbReference type="NCBI Taxonomy" id="623"/>
    <lineage>
        <taxon>Bacteria</taxon>
        <taxon>Pseudomonadati</taxon>
        <taxon>Pseudomonadota</taxon>
        <taxon>Gammaproteobacteria</taxon>
        <taxon>Enterobacterales</taxon>
        <taxon>Enterobacteriaceae</taxon>
        <taxon>Shigella</taxon>
    </lineage>
</organism>
<protein>
    <recommendedName>
        <fullName>Uncharacterized inner membrane transporter YhbE</fullName>
    </recommendedName>
</protein>
<dbReference type="EMBL" id="AE005674">
    <property type="protein sequence ID" value="AAN44690.1"/>
    <property type="molecule type" value="Genomic_DNA"/>
</dbReference>
<dbReference type="EMBL" id="AE014073">
    <property type="protein sequence ID" value="AAP18504.1"/>
    <property type="molecule type" value="Genomic_DNA"/>
</dbReference>
<dbReference type="RefSeq" id="NP_708983.1">
    <property type="nucleotide sequence ID" value="NC_004337.2"/>
</dbReference>
<dbReference type="RefSeq" id="WP_000813037.1">
    <property type="nucleotide sequence ID" value="NZ_WPGW01000004.1"/>
</dbReference>
<dbReference type="SMR" id="P0AA75"/>
<dbReference type="STRING" id="198214.SF3224"/>
<dbReference type="PaxDb" id="198214-SF3224"/>
<dbReference type="GeneID" id="1027118"/>
<dbReference type="KEGG" id="sfl:SF3224"/>
<dbReference type="KEGG" id="sfx:S3442"/>
<dbReference type="PATRIC" id="fig|198214.7.peg.3825"/>
<dbReference type="HOGENOM" id="CLU_074108_1_0_6"/>
<dbReference type="Proteomes" id="UP000001006">
    <property type="component" value="Chromosome"/>
</dbReference>
<dbReference type="Proteomes" id="UP000002673">
    <property type="component" value="Chromosome"/>
</dbReference>
<dbReference type="GO" id="GO:0005886">
    <property type="term" value="C:plasma membrane"/>
    <property type="evidence" value="ECO:0007669"/>
    <property type="project" value="UniProtKB-SubCell"/>
</dbReference>
<dbReference type="Gene3D" id="1.10.3730.20">
    <property type="match status" value="1"/>
</dbReference>
<dbReference type="InterPro" id="IPR000620">
    <property type="entry name" value="EamA_dom"/>
</dbReference>
<dbReference type="PANTHER" id="PTHR22911">
    <property type="entry name" value="ACYL-MALONYL CONDENSING ENZYME-RELATED"/>
    <property type="match status" value="1"/>
</dbReference>
<dbReference type="PANTHER" id="PTHR22911:SF134">
    <property type="entry name" value="DMT FAMILY TRANSPORTER"/>
    <property type="match status" value="1"/>
</dbReference>
<dbReference type="Pfam" id="PF00892">
    <property type="entry name" value="EamA"/>
    <property type="match status" value="2"/>
</dbReference>
<dbReference type="SUPFAM" id="SSF103481">
    <property type="entry name" value="Multidrug resistance efflux transporter EmrE"/>
    <property type="match status" value="1"/>
</dbReference>
<evidence type="ECO:0000250" key="1"/>
<evidence type="ECO:0000255" key="2"/>
<evidence type="ECO:0000305" key="3"/>
<accession>P0AA75</accession>
<accession>P28636</accession>
<reference key="1">
    <citation type="journal article" date="2002" name="Nucleic Acids Res.">
        <title>Genome sequence of Shigella flexneri 2a: insights into pathogenicity through comparison with genomes of Escherichia coli K12 and O157.</title>
        <authorList>
            <person name="Jin Q."/>
            <person name="Yuan Z."/>
            <person name="Xu J."/>
            <person name="Wang Y."/>
            <person name="Shen Y."/>
            <person name="Lu W."/>
            <person name="Wang J."/>
            <person name="Liu H."/>
            <person name="Yang J."/>
            <person name="Yang F."/>
            <person name="Zhang X."/>
            <person name="Zhang J."/>
            <person name="Yang G."/>
            <person name="Wu H."/>
            <person name="Qu D."/>
            <person name="Dong J."/>
            <person name="Sun L."/>
            <person name="Xue Y."/>
            <person name="Zhao A."/>
            <person name="Gao Y."/>
            <person name="Zhu J."/>
            <person name="Kan B."/>
            <person name="Ding K."/>
            <person name="Chen S."/>
            <person name="Cheng H."/>
            <person name="Yao Z."/>
            <person name="He B."/>
            <person name="Chen R."/>
            <person name="Ma D."/>
            <person name="Qiang B."/>
            <person name="Wen Y."/>
            <person name="Hou Y."/>
            <person name="Yu J."/>
        </authorList>
    </citation>
    <scope>NUCLEOTIDE SEQUENCE [LARGE SCALE GENOMIC DNA]</scope>
    <source>
        <strain>301 / Serotype 2a</strain>
    </source>
</reference>
<reference key="2">
    <citation type="journal article" date="2003" name="Infect. Immun.">
        <title>Complete genome sequence and comparative genomics of Shigella flexneri serotype 2a strain 2457T.</title>
        <authorList>
            <person name="Wei J."/>
            <person name="Goldberg M.B."/>
            <person name="Burland V."/>
            <person name="Venkatesan M.M."/>
            <person name="Deng W."/>
            <person name="Fournier G."/>
            <person name="Mayhew G.F."/>
            <person name="Plunkett G. III"/>
            <person name="Rose D.J."/>
            <person name="Darling A."/>
            <person name="Mau B."/>
            <person name="Perna N.T."/>
            <person name="Payne S.M."/>
            <person name="Runyen-Janecky L.J."/>
            <person name="Zhou S."/>
            <person name="Schwartz D.C."/>
            <person name="Blattner F.R."/>
        </authorList>
    </citation>
    <scope>NUCLEOTIDE SEQUENCE [LARGE SCALE GENOMIC DNA]</scope>
    <source>
        <strain>ATCC 700930 / 2457T / Serotype 2a</strain>
    </source>
</reference>